<gene>
    <name evidence="1" type="primary">hisB</name>
    <name type="ordered locus">SynWH7803_0269</name>
</gene>
<accession>A5GID0</accession>
<protein>
    <recommendedName>
        <fullName evidence="1">Imidazoleglycerol-phosphate dehydratase</fullName>
        <shortName evidence="1">IGPD</shortName>
        <ecNumber evidence="1">4.2.1.19</ecNumber>
    </recommendedName>
</protein>
<name>HIS7_SYNPW</name>
<reference key="1">
    <citation type="submission" date="2006-05" db="EMBL/GenBank/DDBJ databases">
        <authorList>
            <consortium name="Genoscope"/>
        </authorList>
    </citation>
    <scope>NUCLEOTIDE SEQUENCE [LARGE SCALE GENOMIC DNA]</scope>
    <source>
        <strain>WH7803</strain>
    </source>
</reference>
<proteinExistence type="inferred from homology"/>
<keyword id="KW-0028">Amino-acid biosynthesis</keyword>
<keyword id="KW-0963">Cytoplasm</keyword>
<keyword id="KW-0368">Histidine biosynthesis</keyword>
<keyword id="KW-0456">Lyase</keyword>
<keyword id="KW-1185">Reference proteome</keyword>
<evidence type="ECO:0000255" key="1">
    <source>
        <dbReference type="HAMAP-Rule" id="MF_00076"/>
    </source>
</evidence>
<organism>
    <name type="scientific">Synechococcus sp. (strain WH7803)</name>
    <dbReference type="NCBI Taxonomy" id="32051"/>
    <lineage>
        <taxon>Bacteria</taxon>
        <taxon>Bacillati</taxon>
        <taxon>Cyanobacteriota</taxon>
        <taxon>Cyanophyceae</taxon>
        <taxon>Synechococcales</taxon>
        <taxon>Synechococcaceae</taxon>
        <taxon>Synechococcus</taxon>
    </lineage>
</organism>
<comment type="catalytic activity">
    <reaction evidence="1">
        <text>D-erythro-1-(imidazol-4-yl)glycerol 3-phosphate = 3-(imidazol-4-yl)-2-oxopropyl phosphate + H2O</text>
        <dbReference type="Rhea" id="RHEA:11040"/>
        <dbReference type="ChEBI" id="CHEBI:15377"/>
        <dbReference type="ChEBI" id="CHEBI:57766"/>
        <dbReference type="ChEBI" id="CHEBI:58278"/>
        <dbReference type="EC" id="4.2.1.19"/>
    </reaction>
</comment>
<comment type="pathway">
    <text evidence="1">Amino-acid biosynthesis; L-histidine biosynthesis; L-histidine from 5-phospho-alpha-D-ribose 1-diphosphate: step 6/9.</text>
</comment>
<comment type="subcellular location">
    <subcellularLocation>
        <location evidence="1">Cytoplasm</location>
    </subcellularLocation>
</comment>
<comment type="similarity">
    <text evidence="1">Belongs to the imidazoleglycerol-phosphate dehydratase family.</text>
</comment>
<feature type="chain" id="PRO_1000010363" description="Imidazoleglycerol-phosphate dehydratase">
    <location>
        <begin position="1"/>
        <end position="202"/>
    </location>
</feature>
<sequence length="202" mass="21910">MMRTGEIHRVTGETDVQVRLNLDGSGQCQASTGVAFLDHMLQQISSHGLIDLEISARGDTHIDDHHTNEDVGIAVGQALAQALGDRRGIHRFGHFLAPLDEALVQVALDCSGRPHLSYSLSIPSQKIGTYDTELVKEFFVAVVNNSGLTLHIRQLDGANSHHIVEACFKAFARALRQATEIDPRRADAVPSSKGVLEQAGMN</sequence>
<dbReference type="EC" id="4.2.1.19" evidence="1"/>
<dbReference type="EMBL" id="CT971583">
    <property type="protein sequence ID" value="CAK22695.1"/>
    <property type="molecule type" value="Genomic_DNA"/>
</dbReference>
<dbReference type="SMR" id="A5GID0"/>
<dbReference type="STRING" id="32051.SynWH7803_0269"/>
<dbReference type="KEGG" id="syx:SynWH7803_0269"/>
<dbReference type="eggNOG" id="COG0131">
    <property type="taxonomic scope" value="Bacteria"/>
</dbReference>
<dbReference type="HOGENOM" id="CLU_044308_2_0_3"/>
<dbReference type="OrthoDB" id="9790411at2"/>
<dbReference type="UniPathway" id="UPA00031">
    <property type="reaction ID" value="UER00011"/>
</dbReference>
<dbReference type="Proteomes" id="UP000001566">
    <property type="component" value="Chromosome"/>
</dbReference>
<dbReference type="GO" id="GO:0005737">
    <property type="term" value="C:cytoplasm"/>
    <property type="evidence" value="ECO:0007669"/>
    <property type="project" value="UniProtKB-SubCell"/>
</dbReference>
<dbReference type="GO" id="GO:0004424">
    <property type="term" value="F:imidazoleglycerol-phosphate dehydratase activity"/>
    <property type="evidence" value="ECO:0007669"/>
    <property type="project" value="UniProtKB-UniRule"/>
</dbReference>
<dbReference type="GO" id="GO:0000105">
    <property type="term" value="P:L-histidine biosynthetic process"/>
    <property type="evidence" value="ECO:0007669"/>
    <property type="project" value="UniProtKB-UniRule"/>
</dbReference>
<dbReference type="CDD" id="cd07914">
    <property type="entry name" value="IGPD"/>
    <property type="match status" value="1"/>
</dbReference>
<dbReference type="FunFam" id="3.30.230.40:FF:000002">
    <property type="entry name" value="Imidazoleglycerol-phosphate dehydratase"/>
    <property type="match status" value="1"/>
</dbReference>
<dbReference type="FunFam" id="3.30.230.40:FF:000003">
    <property type="entry name" value="Imidazoleglycerol-phosphate dehydratase HisB"/>
    <property type="match status" value="1"/>
</dbReference>
<dbReference type="Gene3D" id="3.30.230.40">
    <property type="entry name" value="Imidazole glycerol phosphate dehydratase, domain 1"/>
    <property type="match status" value="2"/>
</dbReference>
<dbReference type="HAMAP" id="MF_00076">
    <property type="entry name" value="HisB"/>
    <property type="match status" value="1"/>
</dbReference>
<dbReference type="InterPro" id="IPR038494">
    <property type="entry name" value="IGPD_sf"/>
</dbReference>
<dbReference type="InterPro" id="IPR000807">
    <property type="entry name" value="ImidazoleglycerolP_deHydtase"/>
</dbReference>
<dbReference type="InterPro" id="IPR020565">
    <property type="entry name" value="ImidazoleglycerP_deHydtase_CS"/>
</dbReference>
<dbReference type="InterPro" id="IPR020568">
    <property type="entry name" value="Ribosomal_Su5_D2-typ_SF"/>
</dbReference>
<dbReference type="NCBIfam" id="NF002108">
    <property type="entry name" value="PRK00951.1-3"/>
    <property type="match status" value="1"/>
</dbReference>
<dbReference type="NCBIfam" id="NF002109">
    <property type="entry name" value="PRK00951.1-5"/>
    <property type="match status" value="1"/>
</dbReference>
<dbReference type="NCBIfam" id="NF002111">
    <property type="entry name" value="PRK00951.2-1"/>
    <property type="match status" value="1"/>
</dbReference>
<dbReference type="NCBIfam" id="NF002114">
    <property type="entry name" value="PRK00951.2-4"/>
    <property type="match status" value="1"/>
</dbReference>
<dbReference type="PANTHER" id="PTHR23133:SF2">
    <property type="entry name" value="IMIDAZOLEGLYCEROL-PHOSPHATE DEHYDRATASE"/>
    <property type="match status" value="1"/>
</dbReference>
<dbReference type="PANTHER" id="PTHR23133">
    <property type="entry name" value="IMIDAZOLEGLYCEROL-PHOSPHATE DEHYDRATASE HIS7"/>
    <property type="match status" value="1"/>
</dbReference>
<dbReference type="Pfam" id="PF00475">
    <property type="entry name" value="IGPD"/>
    <property type="match status" value="1"/>
</dbReference>
<dbReference type="SUPFAM" id="SSF54211">
    <property type="entry name" value="Ribosomal protein S5 domain 2-like"/>
    <property type="match status" value="2"/>
</dbReference>
<dbReference type="PROSITE" id="PS00954">
    <property type="entry name" value="IGP_DEHYDRATASE_1"/>
    <property type="match status" value="1"/>
</dbReference>
<dbReference type="PROSITE" id="PS00955">
    <property type="entry name" value="IGP_DEHYDRATASE_2"/>
    <property type="match status" value="1"/>
</dbReference>